<feature type="chain" id="PRO_1000126527" description="Small ribosomal subunit protein bS20">
    <location>
        <begin position="1"/>
        <end position="99"/>
    </location>
</feature>
<keyword id="KW-1185">Reference proteome</keyword>
<keyword id="KW-0687">Ribonucleoprotein</keyword>
<keyword id="KW-0689">Ribosomal protein</keyword>
<keyword id="KW-0694">RNA-binding</keyword>
<keyword id="KW-0699">rRNA-binding</keyword>
<organism>
    <name type="scientific">Picosynechococcus sp. (strain ATCC 27264 / PCC 7002 / PR-6)</name>
    <name type="common">Agmenellum quadruplicatum</name>
    <dbReference type="NCBI Taxonomy" id="32049"/>
    <lineage>
        <taxon>Bacteria</taxon>
        <taxon>Bacillati</taxon>
        <taxon>Cyanobacteriota</taxon>
        <taxon>Cyanophyceae</taxon>
        <taxon>Oscillatoriophycideae</taxon>
        <taxon>Chroococcales</taxon>
        <taxon>Geminocystaceae</taxon>
        <taxon>Picosynechococcus</taxon>
    </lineage>
</organism>
<comment type="function">
    <text evidence="1">Binds directly to 16S ribosomal RNA.</text>
</comment>
<comment type="similarity">
    <text evidence="1">Belongs to the bacterial ribosomal protein bS20 family.</text>
</comment>
<name>RS20_PICP2</name>
<dbReference type="EMBL" id="CP000951">
    <property type="protein sequence ID" value="ACB00035.1"/>
    <property type="molecule type" value="Genomic_DNA"/>
</dbReference>
<dbReference type="RefSeq" id="WP_012307657.1">
    <property type="nucleotide sequence ID" value="NZ_JAHHPU010000002.1"/>
</dbReference>
<dbReference type="SMR" id="B1XHW6"/>
<dbReference type="STRING" id="32049.SYNPCC7002_A2048"/>
<dbReference type="KEGG" id="syp:SYNPCC7002_A2048"/>
<dbReference type="eggNOG" id="COG0268">
    <property type="taxonomic scope" value="Bacteria"/>
</dbReference>
<dbReference type="HOGENOM" id="CLU_160655_5_0_3"/>
<dbReference type="Proteomes" id="UP000001688">
    <property type="component" value="Chromosome"/>
</dbReference>
<dbReference type="GO" id="GO:0005829">
    <property type="term" value="C:cytosol"/>
    <property type="evidence" value="ECO:0007669"/>
    <property type="project" value="TreeGrafter"/>
</dbReference>
<dbReference type="GO" id="GO:0015935">
    <property type="term" value="C:small ribosomal subunit"/>
    <property type="evidence" value="ECO:0007669"/>
    <property type="project" value="TreeGrafter"/>
</dbReference>
<dbReference type="GO" id="GO:0070181">
    <property type="term" value="F:small ribosomal subunit rRNA binding"/>
    <property type="evidence" value="ECO:0007669"/>
    <property type="project" value="TreeGrafter"/>
</dbReference>
<dbReference type="GO" id="GO:0003735">
    <property type="term" value="F:structural constituent of ribosome"/>
    <property type="evidence" value="ECO:0007669"/>
    <property type="project" value="InterPro"/>
</dbReference>
<dbReference type="GO" id="GO:0006412">
    <property type="term" value="P:translation"/>
    <property type="evidence" value="ECO:0007669"/>
    <property type="project" value="UniProtKB-UniRule"/>
</dbReference>
<dbReference type="FunFam" id="1.20.58.110:FF:000001">
    <property type="entry name" value="30S ribosomal protein S20"/>
    <property type="match status" value="1"/>
</dbReference>
<dbReference type="Gene3D" id="1.20.58.110">
    <property type="entry name" value="Ribosomal protein S20"/>
    <property type="match status" value="1"/>
</dbReference>
<dbReference type="HAMAP" id="MF_00500">
    <property type="entry name" value="Ribosomal_bS20"/>
    <property type="match status" value="1"/>
</dbReference>
<dbReference type="InterPro" id="IPR002583">
    <property type="entry name" value="Ribosomal_bS20"/>
</dbReference>
<dbReference type="InterPro" id="IPR036510">
    <property type="entry name" value="Ribosomal_bS20_sf"/>
</dbReference>
<dbReference type="NCBIfam" id="TIGR00029">
    <property type="entry name" value="S20"/>
    <property type="match status" value="1"/>
</dbReference>
<dbReference type="PANTHER" id="PTHR33398">
    <property type="entry name" value="30S RIBOSOMAL PROTEIN S20"/>
    <property type="match status" value="1"/>
</dbReference>
<dbReference type="PANTHER" id="PTHR33398:SF1">
    <property type="entry name" value="SMALL RIBOSOMAL SUBUNIT PROTEIN BS20C"/>
    <property type="match status" value="1"/>
</dbReference>
<dbReference type="Pfam" id="PF01649">
    <property type="entry name" value="Ribosomal_S20p"/>
    <property type="match status" value="1"/>
</dbReference>
<dbReference type="SUPFAM" id="SSF46992">
    <property type="entry name" value="Ribosomal protein S20"/>
    <property type="match status" value="1"/>
</dbReference>
<protein>
    <recommendedName>
        <fullName evidence="1">Small ribosomal subunit protein bS20</fullName>
    </recommendedName>
    <alternativeName>
        <fullName evidence="2">30S ribosomal protein S20</fullName>
    </alternativeName>
</protein>
<evidence type="ECO:0000255" key="1">
    <source>
        <dbReference type="HAMAP-Rule" id="MF_00500"/>
    </source>
</evidence>
<evidence type="ECO:0000305" key="2"/>
<sequence length="99" mass="10967">MANIKSAIKRIQTAERNRLRNKSYKSAVKTLTKKCLQAIEQYAAAPSADAQAEAQKYLSATYSKIDKAVKRGVYHHNTAARKKARLAKEFKQATGQVAA</sequence>
<reference key="1">
    <citation type="submission" date="2008-02" db="EMBL/GenBank/DDBJ databases">
        <title>Complete sequence of Synechococcus sp. PCC 7002.</title>
        <authorList>
            <person name="Li T."/>
            <person name="Zhao J."/>
            <person name="Zhao C."/>
            <person name="Liu Z."/>
            <person name="Zhao F."/>
            <person name="Marquardt J."/>
            <person name="Nomura C.T."/>
            <person name="Persson S."/>
            <person name="Detter J.C."/>
            <person name="Richardson P.M."/>
            <person name="Lanz C."/>
            <person name="Schuster S.C."/>
            <person name="Wang J."/>
            <person name="Li S."/>
            <person name="Huang X."/>
            <person name="Cai T."/>
            <person name="Yu Z."/>
            <person name="Luo J."/>
            <person name="Zhao J."/>
            <person name="Bryant D.A."/>
        </authorList>
    </citation>
    <scope>NUCLEOTIDE SEQUENCE [LARGE SCALE GENOMIC DNA]</scope>
    <source>
        <strain>ATCC 27264 / PCC 7002 / PR-6</strain>
    </source>
</reference>
<gene>
    <name evidence="1" type="primary">rpsT</name>
    <name evidence="1" type="synonym">rps20</name>
    <name type="ordered locus">SYNPCC7002_A2048</name>
</gene>
<proteinExistence type="inferred from homology"/>
<accession>B1XHW6</accession>